<evidence type="ECO:0000255" key="1">
    <source>
        <dbReference type="HAMAP-Rule" id="MF_01865"/>
    </source>
</evidence>
<evidence type="ECO:0000255" key="2">
    <source>
        <dbReference type="PROSITE-ProRule" id="PRU01266"/>
    </source>
</evidence>
<dbReference type="EC" id="2.8.4.4" evidence="1"/>
<dbReference type="EMBL" id="AP009493">
    <property type="protein sequence ID" value="BAG18598.1"/>
    <property type="molecule type" value="Genomic_DNA"/>
</dbReference>
<dbReference type="RefSeq" id="WP_003965840.1">
    <property type="nucleotide sequence ID" value="NC_010572.1"/>
</dbReference>
<dbReference type="SMR" id="B1VXY2"/>
<dbReference type="KEGG" id="sgr:SGR_1769"/>
<dbReference type="eggNOG" id="COG0621">
    <property type="taxonomic scope" value="Bacteria"/>
</dbReference>
<dbReference type="HOGENOM" id="CLU_018697_0_1_11"/>
<dbReference type="Proteomes" id="UP000001685">
    <property type="component" value="Chromosome"/>
</dbReference>
<dbReference type="GO" id="GO:0005829">
    <property type="term" value="C:cytosol"/>
    <property type="evidence" value="ECO:0007669"/>
    <property type="project" value="TreeGrafter"/>
</dbReference>
<dbReference type="GO" id="GO:0051539">
    <property type="term" value="F:4 iron, 4 sulfur cluster binding"/>
    <property type="evidence" value="ECO:0007669"/>
    <property type="project" value="UniProtKB-UniRule"/>
</dbReference>
<dbReference type="GO" id="GO:0035599">
    <property type="term" value="F:aspartic acid methylthiotransferase activity"/>
    <property type="evidence" value="ECO:0007669"/>
    <property type="project" value="TreeGrafter"/>
</dbReference>
<dbReference type="GO" id="GO:0046872">
    <property type="term" value="F:metal ion binding"/>
    <property type="evidence" value="ECO:0007669"/>
    <property type="project" value="UniProtKB-KW"/>
</dbReference>
<dbReference type="GO" id="GO:0103039">
    <property type="term" value="F:protein methylthiotransferase activity"/>
    <property type="evidence" value="ECO:0007669"/>
    <property type="project" value="UniProtKB-EC"/>
</dbReference>
<dbReference type="GO" id="GO:0006400">
    <property type="term" value="P:tRNA modification"/>
    <property type="evidence" value="ECO:0007669"/>
    <property type="project" value="InterPro"/>
</dbReference>
<dbReference type="CDD" id="cd01335">
    <property type="entry name" value="Radical_SAM"/>
    <property type="match status" value="1"/>
</dbReference>
<dbReference type="FunFam" id="3.40.50.12160:FF:000007">
    <property type="entry name" value="Ribosomal protein S12 methylthiotransferase RimO"/>
    <property type="match status" value="1"/>
</dbReference>
<dbReference type="FunFam" id="3.80.30.20:FF:000001">
    <property type="entry name" value="tRNA-2-methylthio-N(6)-dimethylallyladenosine synthase 2"/>
    <property type="match status" value="1"/>
</dbReference>
<dbReference type="Gene3D" id="3.40.50.12160">
    <property type="entry name" value="Methylthiotransferase, N-terminal domain"/>
    <property type="match status" value="1"/>
</dbReference>
<dbReference type="Gene3D" id="2.40.50.140">
    <property type="entry name" value="Nucleic acid-binding proteins"/>
    <property type="match status" value="1"/>
</dbReference>
<dbReference type="Gene3D" id="3.80.30.20">
    <property type="entry name" value="tm_1862 like domain"/>
    <property type="match status" value="1"/>
</dbReference>
<dbReference type="HAMAP" id="MF_01865">
    <property type="entry name" value="MTTase_RimO"/>
    <property type="match status" value="1"/>
</dbReference>
<dbReference type="InterPro" id="IPR006638">
    <property type="entry name" value="Elp3/MiaA/NifB-like_rSAM"/>
</dbReference>
<dbReference type="InterPro" id="IPR005839">
    <property type="entry name" value="Methylthiotransferase"/>
</dbReference>
<dbReference type="InterPro" id="IPR020612">
    <property type="entry name" value="Methylthiotransferase_CS"/>
</dbReference>
<dbReference type="InterPro" id="IPR013848">
    <property type="entry name" value="Methylthiotransferase_N"/>
</dbReference>
<dbReference type="InterPro" id="IPR038135">
    <property type="entry name" value="Methylthiotransferase_N_sf"/>
</dbReference>
<dbReference type="InterPro" id="IPR012340">
    <property type="entry name" value="NA-bd_OB-fold"/>
</dbReference>
<dbReference type="InterPro" id="IPR005840">
    <property type="entry name" value="Ribosomal_uS12_MeSTrfase_RimO"/>
</dbReference>
<dbReference type="InterPro" id="IPR007197">
    <property type="entry name" value="rSAM"/>
</dbReference>
<dbReference type="InterPro" id="IPR023404">
    <property type="entry name" value="rSAM_horseshoe"/>
</dbReference>
<dbReference type="InterPro" id="IPR002792">
    <property type="entry name" value="TRAM_dom"/>
</dbReference>
<dbReference type="NCBIfam" id="TIGR01125">
    <property type="entry name" value="30S ribosomal protein S12 methylthiotransferase RimO"/>
    <property type="match status" value="1"/>
</dbReference>
<dbReference type="NCBIfam" id="TIGR00089">
    <property type="entry name" value="MiaB/RimO family radical SAM methylthiotransferase"/>
    <property type="match status" value="1"/>
</dbReference>
<dbReference type="PANTHER" id="PTHR43837">
    <property type="entry name" value="RIBOSOMAL PROTEIN S12 METHYLTHIOTRANSFERASE RIMO"/>
    <property type="match status" value="1"/>
</dbReference>
<dbReference type="PANTHER" id="PTHR43837:SF1">
    <property type="entry name" value="RIBOSOMAL PROTEIN US12 METHYLTHIOTRANSFERASE RIMO"/>
    <property type="match status" value="1"/>
</dbReference>
<dbReference type="Pfam" id="PF04055">
    <property type="entry name" value="Radical_SAM"/>
    <property type="match status" value="1"/>
</dbReference>
<dbReference type="Pfam" id="PF18693">
    <property type="entry name" value="TRAM_2"/>
    <property type="match status" value="1"/>
</dbReference>
<dbReference type="Pfam" id="PF00919">
    <property type="entry name" value="UPF0004"/>
    <property type="match status" value="1"/>
</dbReference>
<dbReference type="SFLD" id="SFLDG01082">
    <property type="entry name" value="B12-binding_domain_containing"/>
    <property type="match status" value="1"/>
</dbReference>
<dbReference type="SFLD" id="SFLDG01061">
    <property type="entry name" value="methylthiotransferase"/>
    <property type="match status" value="1"/>
</dbReference>
<dbReference type="SFLD" id="SFLDF00274">
    <property type="entry name" value="ribosomal_protein_S12_methylth"/>
    <property type="match status" value="1"/>
</dbReference>
<dbReference type="SMART" id="SM00729">
    <property type="entry name" value="Elp3"/>
    <property type="match status" value="1"/>
</dbReference>
<dbReference type="SUPFAM" id="SSF102114">
    <property type="entry name" value="Radical SAM enzymes"/>
    <property type="match status" value="1"/>
</dbReference>
<dbReference type="PROSITE" id="PS51449">
    <property type="entry name" value="MTTASE_N"/>
    <property type="match status" value="1"/>
</dbReference>
<dbReference type="PROSITE" id="PS01278">
    <property type="entry name" value="MTTASE_RADICAL"/>
    <property type="match status" value="1"/>
</dbReference>
<dbReference type="PROSITE" id="PS51918">
    <property type="entry name" value="RADICAL_SAM"/>
    <property type="match status" value="1"/>
</dbReference>
<dbReference type="PROSITE" id="PS50926">
    <property type="entry name" value="TRAM"/>
    <property type="match status" value="1"/>
</dbReference>
<organism>
    <name type="scientific">Streptomyces griseus subsp. griseus (strain JCM 4626 / CBS 651.72 / NBRC 13350 / KCC S-0626 / ISP 5235)</name>
    <dbReference type="NCBI Taxonomy" id="455632"/>
    <lineage>
        <taxon>Bacteria</taxon>
        <taxon>Bacillati</taxon>
        <taxon>Actinomycetota</taxon>
        <taxon>Actinomycetes</taxon>
        <taxon>Kitasatosporales</taxon>
        <taxon>Streptomycetaceae</taxon>
        <taxon>Streptomyces</taxon>
    </lineage>
</organism>
<accession>B1VXY2</accession>
<name>RIMO_STRGG</name>
<protein>
    <recommendedName>
        <fullName evidence="1">Ribosomal protein uS12 methylthiotransferase RimO</fullName>
        <shortName evidence="1">uS12 MTTase</shortName>
        <shortName evidence="1">uS12 methylthiotransferase</shortName>
        <ecNumber evidence="1">2.8.4.4</ecNumber>
    </recommendedName>
    <alternativeName>
        <fullName evidence="1">Ribosomal protein uS12 (aspartate-C(3))-methylthiotransferase</fullName>
    </alternativeName>
    <alternativeName>
        <fullName evidence="1">Ribosome maturation factor RimO</fullName>
    </alternativeName>
</protein>
<gene>
    <name evidence="1" type="primary">rimO</name>
    <name type="ordered locus">SGR_1769</name>
</gene>
<proteinExistence type="inferred from homology"/>
<feature type="chain" id="PRO_0000375024" description="Ribosomal protein uS12 methylthiotransferase RimO">
    <location>
        <begin position="1"/>
        <end position="493"/>
    </location>
</feature>
<feature type="domain" description="MTTase N-terminal" evidence="1">
    <location>
        <begin position="5"/>
        <end position="121"/>
    </location>
</feature>
<feature type="domain" description="Radical SAM core" evidence="2">
    <location>
        <begin position="184"/>
        <end position="415"/>
    </location>
</feature>
<feature type="domain" description="TRAM" evidence="1">
    <location>
        <begin position="417"/>
        <end position="487"/>
    </location>
</feature>
<feature type="binding site" evidence="1">
    <location>
        <position position="14"/>
    </location>
    <ligand>
        <name>[4Fe-4S] cluster</name>
        <dbReference type="ChEBI" id="CHEBI:49883"/>
        <label>1</label>
    </ligand>
</feature>
<feature type="binding site" evidence="1">
    <location>
        <position position="50"/>
    </location>
    <ligand>
        <name>[4Fe-4S] cluster</name>
        <dbReference type="ChEBI" id="CHEBI:49883"/>
        <label>1</label>
    </ligand>
</feature>
<feature type="binding site" evidence="1">
    <location>
        <position position="84"/>
    </location>
    <ligand>
        <name>[4Fe-4S] cluster</name>
        <dbReference type="ChEBI" id="CHEBI:49883"/>
        <label>1</label>
    </ligand>
</feature>
<feature type="binding site" evidence="1">
    <location>
        <position position="198"/>
    </location>
    <ligand>
        <name>[4Fe-4S] cluster</name>
        <dbReference type="ChEBI" id="CHEBI:49883"/>
        <label>2</label>
        <note>4Fe-4S-S-AdoMet</note>
    </ligand>
</feature>
<feature type="binding site" evidence="1">
    <location>
        <position position="202"/>
    </location>
    <ligand>
        <name>[4Fe-4S] cluster</name>
        <dbReference type="ChEBI" id="CHEBI:49883"/>
        <label>2</label>
        <note>4Fe-4S-S-AdoMet</note>
    </ligand>
</feature>
<feature type="binding site" evidence="1">
    <location>
        <position position="205"/>
    </location>
    <ligand>
        <name>[4Fe-4S] cluster</name>
        <dbReference type="ChEBI" id="CHEBI:49883"/>
        <label>2</label>
        <note>4Fe-4S-S-AdoMet</note>
    </ligand>
</feature>
<comment type="function">
    <text evidence="1">Catalyzes the methylthiolation of an aspartic acid residue of ribosomal protein uS12.</text>
</comment>
<comment type="catalytic activity">
    <reaction evidence="1">
        <text>L-aspartate(89)-[ribosomal protein uS12]-hydrogen + (sulfur carrier)-SH + AH2 + 2 S-adenosyl-L-methionine = 3-methylsulfanyl-L-aspartate(89)-[ribosomal protein uS12]-hydrogen + (sulfur carrier)-H + 5'-deoxyadenosine + L-methionine + A + S-adenosyl-L-homocysteine + 2 H(+)</text>
        <dbReference type="Rhea" id="RHEA:37087"/>
        <dbReference type="Rhea" id="RHEA-COMP:10460"/>
        <dbReference type="Rhea" id="RHEA-COMP:10461"/>
        <dbReference type="Rhea" id="RHEA-COMP:14737"/>
        <dbReference type="Rhea" id="RHEA-COMP:14739"/>
        <dbReference type="ChEBI" id="CHEBI:13193"/>
        <dbReference type="ChEBI" id="CHEBI:15378"/>
        <dbReference type="ChEBI" id="CHEBI:17319"/>
        <dbReference type="ChEBI" id="CHEBI:17499"/>
        <dbReference type="ChEBI" id="CHEBI:29917"/>
        <dbReference type="ChEBI" id="CHEBI:29961"/>
        <dbReference type="ChEBI" id="CHEBI:57844"/>
        <dbReference type="ChEBI" id="CHEBI:57856"/>
        <dbReference type="ChEBI" id="CHEBI:59789"/>
        <dbReference type="ChEBI" id="CHEBI:64428"/>
        <dbReference type="ChEBI" id="CHEBI:73599"/>
        <dbReference type="EC" id="2.8.4.4"/>
    </reaction>
</comment>
<comment type="cofactor">
    <cofactor evidence="1">
        <name>[4Fe-4S] cluster</name>
        <dbReference type="ChEBI" id="CHEBI:49883"/>
    </cofactor>
    <text evidence="1">Binds 2 [4Fe-4S] clusters. One cluster is coordinated with 3 cysteines and an exchangeable S-adenosyl-L-methionine.</text>
</comment>
<comment type="subcellular location">
    <subcellularLocation>
        <location evidence="1">Cytoplasm</location>
    </subcellularLocation>
</comment>
<comment type="similarity">
    <text evidence="1">Belongs to the methylthiotransferase family. RimO subfamily.</text>
</comment>
<sequence length="493" mass="53152">MPERRTVALVTLGCARNEVDSEELAGRLAADGWDLVEDASDADVAVVNTCGFVEAAKKDSVDALLEANDLKDHGRTQAVVAVGCMAERYGKDLAEALPEADGVLGFDDYADISDRLQTILNGGIHASHTPRDRRKLLPISPAERQDTAVALPGHAQEAPAPAPEDLPEGVAPVSGPRAPLRRRLGTSPVASVKLASGCDRRCSFCAIPSFRGSFISRRPSDVLQETRWLAEQGVKEVMLVSENNTSYGKDLGDIRLLETLLPELADVDGIERIRVSYLQPAEMRPGLIDVLTSTPKVAPYFDLSFQHSAPGVLRAMRRFGDTDRFLELLDTIRSKAPQAGARSNFIVGFPGETEADLAELERFLTGARLDAIGVFGYSDEEGTEAVGYENKLDADTIAERLAHISQLAEELTSQRAEERVGETLQVLVESVESEEDGEVAIGRAAHQAPETDGQVVFTTREGLVPGLMVEAKAVGTEGVDLVAEHHELAEVAR</sequence>
<keyword id="KW-0004">4Fe-4S</keyword>
<keyword id="KW-0963">Cytoplasm</keyword>
<keyword id="KW-0408">Iron</keyword>
<keyword id="KW-0411">Iron-sulfur</keyword>
<keyword id="KW-0479">Metal-binding</keyword>
<keyword id="KW-0949">S-adenosyl-L-methionine</keyword>
<keyword id="KW-0808">Transferase</keyword>
<reference key="1">
    <citation type="journal article" date="2008" name="J. Bacteriol.">
        <title>Genome sequence of the streptomycin-producing microorganism Streptomyces griseus IFO 13350.</title>
        <authorList>
            <person name="Ohnishi Y."/>
            <person name="Ishikawa J."/>
            <person name="Hara H."/>
            <person name="Suzuki H."/>
            <person name="Ikenoya M."/>
            <person name="Ikeda H."/>
            <person name="Yamashita A."/>
            <person name="Hattori M."/>
            <person name="Horinouchi S."/>
        </authorList>
    </citation>
    <scope>NUCLEOTIDE SEQUENCE [LARGE SCALE GENOMIC DNA]</scope>
    <source>
        <strain>JCM 4626 / CBS 651.72 / NBRC 13350 / KCC S-0626 / ISP 5235</strain>
    </source>
</reference>